<accession>B0V498</accession>
<name>PQQA_ACIBY</name>
<keyword id="KW-0884">PQQ biosynthesis</keyword>
<feature type="chain" id="PRO_1000131195" description="Coenzyme PQQ synthesis protein A">
    <location>
        <begin position="1"/>
        <end position="24"/>
    </location>
</feature>
<feature type="cross-link" description="Pyrroloquinoline quinone (Glu-Tyr)" evidence="1">
    <location>
        <begin position="16"/>
        <end position="20"/>
    </location>
</feature>
<evidence type="ECO:0000255" key="1">
    <source>
        <dbReference type="HAMAP-Rule" id="MF_00656"/>
    </source>
</evidence>
<protein>
    <recommendedName>
        <fullName evidence="1">Coenzyme PQQ synthesis protein A</fullName>
    </recommendedName>
    <alternativeName>
        <fullName evidence="1">Pyrroloquinoline quinone biosynthesis protein A</fullName>
    </alternativeName>
</protein>
<dbReference type="EMBL" id="CU459141">
    <property type="protein sequence ID" value="CAM86764.1"/>
    <property type="molecule type" value="Genomic_DNA"/>
</dbReference>
<dbReference type="RefSeq" id="WP_001982218.1">
    <property type="nucleotide sequence ID" value="NZ_JBDGFB010000001.1"/>
</dbReference>
<dbReference type="EnsemblBacteria" id="CAM86764">
    <property type="protein sequence ID" value="CAM86764"/>
    <property type="gene ID" value="ABAYE1882"/>
</dbReference>
<dbReference type="GeneID" id="92919613"/>
<dbReference type="KEGG" id="aby:ABAYE1882"/>
<dbReference type="HOGENOM" id="CLU_219131_0_0_6"/>
<dbReference type="UniPathway" id="UPA00539"/>
<dbReference type="GO" id="GO:0018189">
    <property type="term" value="P:pyrroloquinoline quinone biosynthetic process"/>
    <property type="evidence" value="ECO:0007669"/>
    <property type="project" value="UniProtKB-UniRule"/>
</dbReference>
<dbReference type="HAMAP" id="MF_00656">
    <property type="entry name" value="PQQ_syn_PqqA"/>
    <property type="match status" value="1"/>
</dbReference>
<dbReference type="InterPro" id="IPR011725">
    <property type="entry name" value="PQQ_synth_PqqA"/>
</dbReference>
<dbReference type="NCBIfam" id="TIGR02107">
    <property type="entry name" value="PQQ_syn_pqqA"/>
    <property type="match status" value="1"/>
</dbReference>
<dbReference type="Pfam" id="PF08042">
    <property type="entry name" value="PqqA"/>
    <property type="match status" value="1"/>
</dbReference>
<organism>
    <name type="scientific">Acinetobacter baumannii (strain AYE)</name>
    <dbReference type="NCBI Taxonomy" id="509173"/>
    <lineage>
        <taxon>Bacteria</taxon>
        <taxon>Pseudomonadati</taxon>
        <taxon>Pseudomonadota</taxon>
        <taxon>Gammaproteobacteria</taxon>
        <taxon>Moraxellales</taxon>
        <taxon>Moraxellaceae</taxon>
        <taxon>Acinetobacter</taxon>
        <taxon>Acinetobacter calcoaceticus/baumannii complex</taxon>
    </lineage>
</organism>
<gene>
    <name evidence="1" type="primary">pqqA</name>
    <name type="ordered locus">ABAYE1882</name>
</gene>
<comment type="function">
    <text evidence="1">Required for coenzyme pyrroloquinoline quinone (PQQ) biosynthesis. PQQ is probably formed by cross-linking a specific glutamate to a specific tyrosine residue and excising these residues from the peptide.</text>
</comment>
<comment type="pathway">
    <text evidence="1">Cofactor biosynthesis; pyrroloquinoline quinone biosynthesis.</text>
</comment>
<comment type="similarity">
    <text evidence="1">Belongs to the PqqA family.</text>
</comment>
<reference key="1">
    <citation type="journal article" date="2008" name="PLoS ONE">
        <title>Comparative analysis of Acinetobacters: three genomes for three lifestyles.</title>
        <authorList>
            <person name="Vallenet D."/>
            <person name="Nordmann P."/>
            <person name="Barbe V."/>
            <person name="Poirel L."/>
            <person name="Mangenot S."/>
            <person name="Bataille E."/>
            <person name="Dossat C."/>
            <person name="Gas S."/>
            <person name="Kreimeyer A."/>
            <person name="Lenoble P."/>
            <person name="Oztas S."/>
            <person name="Poulain J."/>
            <person name="Segurens B."/>
            <person name="Robert C."/>
            <person name="Abergel C."/>
            <person name="Claverie J.-M."/>
            <person name="Raoult D."/>
            <person name="Medigue C."/>
            <person name="Weissenbach J."/>
            <person name="Cruveiller S."/>
        </authorList>
    </citation>
    <scope>NUCLEOTIDE SEQUENCE [LARGE SCALE GENOMIC DNA]</scope>
    <source>
        <strain>AYE</strain>
    </source>
</reference>
<proteinExistence type="inferred from homology"/>
<sequence>MQWTKPAFTDLRIGFEVTMYFEAR</sequence>